<organism>
    <name type="scientific">Arabidopsis thaliana</name>
    <name type="common">Mouse-ear cress</name>
    <dbReference type="NCBI Taxonomy" id="3702"/>
    <lineage>
        <taxon>Eukaryota</taxon>
        <taxon>Viridiplantae</taxon>
        <taxon>Streptophyta</taxon>
        <taxon>Embryophyta</taxon>
        <taxon>Tracheophyta</taxon>
        <taxon>Spermatophyta</taxon>
        <taxon>Magnoliopsida</taxon>
        <taxon>eudicotyledons</taxon>
        <taxon>Gunneridae</taxon>
        <taxon>Pentapetalae</taxon>
        <taxon>rosids</taxon>
        <taxon>malvids</taxon>
        <taxon>Brassicales</taxon>
        <taxon>Brassicaceae</taxon>
        <taxon>Camelineae</taxon>
        <taxon>Arabidopsis</taxon>
    </lineage>
</organism>
<sequence length="150" mass="16238">MSKRKTKEPKVENVTLGPAVREGEQVFGVVHVFASFNDTFIHVTDLSGRETLVRITGGMKVKADRDESSPYAAMLAAQDVAQRCKELGITAIHVKLRATGGNKTKTPGPGAQSALRALARSGMKIGRIEDVTPIPTDSTRRKGGRRGRRL</sequence>
<protein>
    <recommendedName>
        <fullName evidence="1">Small ribosomal subunit protein uS11x</fullName>
    </recommendedName>
    <alternativeName>
        <fullName>40S ribosomal protein S14-3</fullName>
    </alternativeName>
</protein>
<feature type="chain" id="PRO_0000123346" description="Small ribosomal subunit protein uS11x">
    <location>
        <begin position="1"/>
        <end position="150"/>
    </location>
</feature>
<feature type="sequence conflict" description="In Ref. 5; CAA79035." evidence="2" ref="5">
    <original>A</original>
    <variation>T</variation>
    <location>
        <position position="114"/>
    </location>
</feature>
<reference key="1">
    <citation type="journal article" date="2000" name="Nature">
        <title>Sequence and analysis of chromosome 3 of the plant Arabidopsis thaliana.</title>
        <authorList>
            <person name="Salanoubat M."/>
            <person name="Lemcke K."/>
            <person name="Rieger M."/>
            <person name="Ansorge W."/>
            <person name="Unseld M."/>
            <person name="Fartmann B."/>
            <person name="Valle G."/>
            <person name="Bloecker H."/>
            <person name="Perez-Alonso M."/>
            <person name="Obermaier B."/>
            <person name="Delseny M."/>
            <person name="Boutry M."/>
            <person name="Grivell L.A."/>
            <person name="Mache R."/>
            <person name="Puigdomenech P."/>
            <person name="De Simone V."/>
            <person name="Choisne N."/>
            <person name="Artiguenave F."/>
            <person name="Robert C."/>
            <person name="Brottier P."/>
            <person name="Wincker P."/>
            <person name="Cattolico L."/>
            <person name="Weissenbach J."/>
            <person name="Saurin W."/>
            <person name="Quetier F."/>
            <person name="Schaefer M."/>
            <person name="Mueller-Auer S."/>
            <person name="Gabel C."/>
            <person name="Fuchs M."/>
            <person name="Benes V."/>
            <person name="Wurmbach E."/>
            <person name="Drzonek H."/>
            <person name="Erfle H."/>
            <person name="Jordan N."/>
            <person name="Bangert S."/>
            <person name="Wiedelmann R."/>
            <person name="Kranz H."/>
            <person name="Voss H."/>
            <person name="Holland R."/>
            <person name="Brandt P."/>
            <person name="Nyakatura G."/>
            <person name="Vezzi A."/>
            <person name="D'Angelo M."/>
            <person name="Pallavicini A."/>
            <person name="Toppo S."/>
            <person name="Simionati B."/>
            <person name="Conrad A."/>
            <person name="Hornischer K."/>
            <person name="Kauer G."/>
            <person name="Loehnert T.-H."/>
            <person name="Nordsiek G."/>
            <person name="Reichelt J."/>
            <person name="Scharfe M."/>
            <person name="Schoen O."/>
            <person name="Bargues M."/>
            <person name="Terol J."/>
            <person name="Climent J."/>
            <person name="Navarro P."/>
            <person name="Collado C."/>
            <person name="Perez-Perez A."/>
            <person name="Ottenwaelder B."/>
            <person name="Duchemin D."/>
            <person name="Cooke R."/>
            <person name="Laudie M."/>
            <person name="Berger-Llauro C."/>
            <person name="Purnelle B."/>
            <person name="Masuy D."/>
            <person name="de Haan M."/>
            <person name="Maarse A.C."/>
            <person name="Alcaraz J.-P."/>
            <person name="Cottet A."/>
            <person name="Casacuberta E."/>
            <person name="Monfort A."/>
            <person name="Argiriou A."/>
            <person name="Flores M."/>
            <person name="Liguori R."/>
            <person name="Vitale D."/>
            <person name="Mannhaupt G."/>
            <person name="Haase D."/>
            <person name="Schoof H."/>
            <person name="Rudd S."/>
            <person name="Zaccaria P."/>
            <person name="Mewes H.-W."/>
            <person name="Mayer K.F.X."/>
            <person name="Kaul S."/>
            <person name="Town C.D."/>
            <person name="Koo H.L."/>
            <person name="Tallon L.J."/>
            <person name="Jenkins J."/>
            <person name="Rooney T."/>
            <person name="Rizzo M."/>
            <person name="Walts A."/>
            <person name="Utterback T."/>
            <person name="Fujii C.Y."/>
            <person name="Shea T.P."/>
            <person name="Creasy T.H."/>
            <person name="Haas B."/>
            <person name="Maiti R."/>
            <person name="Wu D."/>
            <person name="Peterson J."/>
            <person name="Van Aken S."/>
            <person name="Pai G."/>
            <person name="Militscher J."/>
            <person name="Sellers P."/>
            <person name="Gill J.E."/>
            <person name="Feldblyum T.V."/>
            <person name="Preuss D."/>
            <person name="Lin X."/>
            <person name="Nierman W.C."/>
            <person name="Salzberg S.L."/>
            <person name="White O."/>
            <person name="Venter J.C."/>
            <person name="Fraser C.M."/>
            <person name="Kaneko T."/>
            <person name="Nakamura Y."/>
            <person name="Sato S."/>
            <person name="Kato T."/>
            <person name="Asamizu E."/>
            <person name="Sasamoto S."/>
            <person name="Kimura T."/>
            <person name="Idesawa K."/>
            <person name="Kawashima K."/>
            <person name="Kishida Y."/>
            <person name="Kiyokawa C."/>
            <person name="Kohara M."/>
            <person name="Matsumoto M."/>
            <person name="Matsuno A."/>
            <person name="Muraki A."/>
            <person name="Nakayama S."/>
            <person name="Nakazaki N."/>
            <person name="Shinpo S."/>
            <person name="Takeuchi C."/>
            <person name="Wada T."/>
            <person name="Watanabe A."/>
            <person name="Yamada M."/>
            <person name="Yasuda M."/>
            <person name="Tabata S."/>
        </authorList>
    </citation>
    <scope>NUCLEOTIDE SEQUENCE [LARGE SCALE GENOMIC DNA]</scope>
    <source>
        <strain>cv. Columbia</strain>
    </source>
</reference>
<reference key="2">
    <citation type="journal article" date="2017" name="Plant J.">
        <title>Araport11: a complete reannotation of the Arabidopsis thaliana reference genome.</title>
        <authorList>
            <person name="Cheng C.Y."/>
            <person name="Krishnakumar V."/>
            <person name="Chan A.P."/>
            <person name="Thibaud-Nissen F."/>
            <person name="Schobel S."/>
            <person name="Town C.D."/>
        </authorList>
    </citation>
    <scope>GENOME REANNOTATION</scope>
    <source>
        <strain>cv. Columbia</strain>
    </source>
</reference>
<reference key="3">
    <citation type="journal article" date="2003" name="Science">
        <title>Empirical analysis of transcriptional activity in the Arabidopsis genome.</title>
        <authorList>
            <person name="Yamada K."/>
            <person name="Lim J."/>
            <person name="Dale J.M."/>
            <person name="Chen H."/>
            <person name="Shinn P."/>
            <person name="Palm C.J."/>
            <person name="Southwick A.M."/>
            <person name="Wu H.C."/>
            <person name="Kim C.J."/>
            <person name="Nguyen M."/>
            <person name="Pham P.K."/>
            <person name="Cheuk R.F."/>
            <person name="Karlin-Newmann G."/>
            <person name="Liu S.X."/>
            <person name="Lam B."/>
            <person name="Sakano H."/>
            <person name="Wu T."/>
            <person name="Yu G."/>
            <person name="Miranda M."/>
            <person name="Quach H.L."/>
            <person name="Tripp M."/>
            <person name="Chang C.H."/>
            <person name="Lee J.M."/>
            <person name="Toriumi M.J."/>
            <person name="Chan M.M."/>
            <person name="Tang C.C."/>
            <person name="Onodera C.S."/>
            <person name="Deng J.M."/>
            <person name="Akiyama K."/>
            <person name="Ansari Y."/>
            <person name="Arakawa T."/>
            <person name="Banh J."/>
            <person name="Banno F."/>
            <person name="Bowser L."/>
            <person name="Brooks S.Y."/>
            <person name="Carninci P."/>
            <person name="Chao Q."/>
            <person name="Choy N."/>
            <person name="Enju A."/>
            <person name="Goldsmith A.D."/>
            <person name="Gurjal M."/>
            <person name="Hansen N.F."/>
            <person name="Hayashizaki Y."/>
            <person name="Johnson-Hopson C."/>
            <person name="Hsuan V.W."/>
            <person name="Iida K."/>
            <person name="Karnes M."/>
            <person name="Khan S."/>
            <person name="Koesema E."/>
            <person name="Ishida J."/>
            <person name="Jiang P.X."/>
            <person name="Jones T."/>
            <person name="Kawai J."/>
            <person name="Kamiya A."/>
            <person name="Meyers C."/>
            <person name="Nakajima M."/>
            <person name="Narusaka M."/>
            <person name="Seki M."/>
            <person name="Sakurai T."/>
            <person name="Satou M."/>
            <person name="Tamse R."/>
            <person name="Vaysberg M."/>
            <person name="Wallender E.K."/>
            <person name="Wong C."/>
            <person name="Yamamura Y."/>
            <person name="Yuan S."/>
            <person name="Shinozaki K."/>
            <person name="Davis R.W."/>
            <person name="Theologis A."/>
            <person name="Ecker J.R."/>
        </authorList>
    </citation>
    <scope>NUCLEOTIDE SEQUENCE [LARGE SCALE MRNA]</scope>
    <source>
        <strain>cv. Columbia</strain>
    </source>
</reference>
<reference key="4">
    <citation type="submission" date="2002-03" db="EMBL/GenBank/DDBJ databases">
        <title>Full-length cDNA from Arabidopsis thaliana.</title>
        <authorList>
            <person name="Brover V.V."/>
            <person name="Troukhan M.E."/>
            <person name="Alexandrov N.A."/>
            <person name="Lu Y.-P."/>
            <person name="Flavell R.B."/>
            <person name="Feldmann K.A."/>
        </authorList>
    </citation>
    <scope>NUCLEOTIDE SEQUENCE [LARGE SCALE MRNA]</scope>
</reference>
<reference key="5">
    <citation type="journal article" date="1993" name="Plant J.">
        <title>An inventory of 1152 expressed sequence tags obtained by partial sequencing of cDNAs from Arabidopsis thaliana.</title>
        <authorList>
            <person name="Hoefte H."/>
            <person name="Desprez T."/>
            <person name="Amselem J."/>
            <person name="Chiapello H."/>
            <person name="Rouze P."/>
            <person name="Caboche M."/>
            <person name="Moisan A."/>
            <person name="Jourjon M.-F."/>
            <person name="Charpenteau J.-L."/>
            <person name="Berthomieu P."/>
            <person name="Guerrier D."/>
            <person name="Giraudat J."/>
            <person name="Quigley F."/>
            <person name="Thomas F."/>
            <person name="Yu D.-Y."/>
            <person name="Mache R."/>
            <person name="Raynal M."/>
            <person name="Cooke R."/>
            <person name="Grellet F."/>
            <person name="Delseny M."/>
            <person name="Parmentier Y."/>
            <person name="de Marcillac G."/>
            <person name="Gigot C."/>
            <person name="Fleck J."/>
            <person name="Philipps G."/>
            <person name="Axelos M."/>
            <person name="Bardet C."/>
            <person name="Tremousaygue D."/>
            <person name="Lescure B."/>
        </authorList>
    </citation>
    <scope>NUCLEOTIDE SEQUENCE [LARGE SCALE MRNA] OF 67-150</scope>
    <source>
        <strain>cv. Columbia</strain>
        <tissue>Green siliques</tissue>
    </source>
</reference>
<reference key="6">
    <citation type="journal article" date="2001" name="Plant Physiol.">
        <title>The organization of cytoplasmic ribosomal protein genes in the Arabidopsis genome.</title>
        <authorList>
            <person name="Barakat A."/>
            <person name="Szick-Miranda K."/>
            <person name="Chang I.-F."/>
            <person name="Guyot R."/>
            <person name="Blanc G."/>
            <person name="Cooke R."/>
            <person name="Delseny M."/>
            <person name="Bailey-Serres J."/>
        </authorList>
    </citation>
    <scope>GENE FAMILY ORGANIZATION</scope>
    <scope>NOMENCLATURE</scope>
</reference>
<reference key="7">
    <citation type="journal article" date="2023" name="Plant Cell">
        <title>An updated nomenclature for plant ribosomal protein genes.</title>
        <authorList>
            <person name="Scarpin M.R."/>
            <person name="Busche M."/>
            <person name="Martinez R.E."/>
            <person name="Harper L.C."/>
            <person name="Reiser L."/>
            <person name="Szakonyi D."/>
            <person name="Merchante C."/>
            <person name="Lan T."/>
            <person name="Xiong W."/>
            <person name="Mo B."/>
            <person name="Tang G."/>
            <person name="Chen X."/>
            <person name="Bailey-Serres J."/>
            <person name="Browning K.S."/>
            <person name="Brunkard J.O."/>
        </authorList>
    </citation>
    <scope>NOMENCLATURE</scope>
</reference>
<accession>P42036</accession>
<accession>Q9SVD9</accession>
<comment type="subcellular location">
    <subcellularLocation>
        <location>Cytoplasm</location>
    </subcellularLocation>
</comment>
<comment type="similarity">
    <text evidence="2">Belongs to the universal ribosomal protein uS11 family.</text>
</comment>
<dbReference type="EMBL" id="AL050300">
    <property type="protein sequence ID" value="CAB43407.1"/>
    <property type="molecule type" value="Genomic_DNA"/>
</dbReference>
<dbReference type="EMBL" id="AL353912">
    <property type="status" value="NOT_ANNOTATED_CDS"/>
    <property type="molecule type" value="Genomic_DNA"/>
</dbReference>
<dbReference type="EMBL" id="CP002686">
    <property type="protein sequence ID" value="AEE78965.1"/>
    <property type="molecule type" value="Genomic_DNA"/>
</dbReference>
<dbReference type="EMBL" id="AY057592">
    <property type="protein sequence ID" value="AAL14387.1"/>
    <property type="molecule type" value="mRNA"/>
</dbReference>
<dbReference type="EMBL" id="AY124833">
    <property type="protein sequence ID" value="AAM70542.1"/>
    <property type="molecule type" value="mRNA"/>
</dbReference>
<dbReference type="EMBL" id="AY088848">
    <property type="protein sequence ID" value="AAM67155.1"/>
    <property type="molecule type" value="mRNA"/>
</dbReference>
<dbReference type="EMBL" id="Z17690">
    <property type="protein sequence ID" value="CAA79035.1"/>
    <property type="molecule type" value="mRNA"/>
</dbReference>
<dbReference type="PIR" id="T08441">
    <property type="entry name" value="T08441"/>
</dbReference>
<dbReference type="RefSeq" id="NP_190826.1">
    <property type="nucleotide sequence ID" value="NM_115118.5"/>
</dbReference>
<dbReference type="SMR" id="P42036"/>
<dbReference type="BioGRID" id="9742">
    <property type="interactions" value="106"/>
</dbReference>
<dbReference type="FunCoup" id="P42036">
    <property type="interactions" value="2867"/>
</dbReference>
<dbReference type="IntAct" id="P42036">
    <property type="interactions" value="1"/>
</dbReference>
<dbReference type="STRING" id="3702.P42036"/>
<dbReference type="iPTMnet" id="P42036"/>
<dbReference type="PaxDb" id="3702-AT3G52580.1"/>
<dbReference type="ProteomicsDB" id="226851"/>
<dbReference type="EnsemblPlants" id="AT3G52580.1">
    <property type="protein sequence ID" value="AT3G52580.1"/>
    <property type="gene ID" value="AT3G52580"/>
</dbReference>
<dbReference type="GeneID" id="824424"/>
<dbReference type="Gramene" id="AT3G52580.1">
    <property type="protein sequence ID" value="AT3G52580.1"/>
    <property type="gene ID" value="AT3G52580"/>
</dbReference>
<dbReference type="KEGG" id="ath:AT3G52580"/>
<dbReference type="Araport" id="AT3G52580"/>
<dbReference type="TAIR" id="AT3G52580"/>
<dbReference type="eggNOG" id="KOG0407">
    <property type="taxonomic scope" value="Eukaryota"/>
</dbReference>
<dbReference type="HOGENOM" id="CLU_072439_6_0_1"/>
<dbReference type="InParanoid" id="P42036"/>
<dbReference type="OMA" id="KWGVAHI"/>
<dbReference type="PhylomeDB" id="P42036"/>
<dbReference type="PRO" id="PR:P42036"/>
<dbReference type="Proteomes" id="UP000006548">
    <property type="component" value="Chromosome 3"/>
</dbReference>
<dbReference type="ExpressionAtlas" id="P42036">
    <property type="expression patterns" value="baseline and differential"/>
</dbReference>
<dbReference type="GO" id="GO:0005829">
    <property type="term" value="C:cytosol"/>
    <property type="evidence" value="ECO:0007005"/>
    <property type="project" value="TAIR"/>
</dbReference>
<dbReference type="GO" id="GO:1990904">
    <property type="term" value="C:ribonucleoprotein complex"/>
    <property type="evidence" value="ECO:0007669"/>
    <property type="project" value="UniProtKB-KW"/>
</dbReference>
<dbReference type="GO" id="GO:0005840">
    <property type="term" value="C:ribosome"/>
    <property type="evidence" value="ECO:0007669"/>
    <property type="project" value="UniProtKB-KW"/>
</dbReference>
<dbReference type="GO" id="GO:0003735">
    <property type="term" value="F:structural constituent of ribosome"/>
    <property type="evidence" value="ECO:0007669"/>
    <property type="project" value="InterPro"/>
</dbReference>
<dbReference type="GO" id="GO:0006412">
    <property type="term" value="P:translation"/>
    <property type="evidence" value="ECO:0007669"/>
    <property type="project" value="InterPro"/>
</dbReference>
<dbReference type="FunFam" id="3.30.420.80:FF:000002">
    <property type="entry name" value="40S ribosomal protein S14"/>
    <property type="match status" value="1"/>
</dbReference>
<dbReference type="Gene3D" id="3.30.420.80">
    <property type="entry name" value="Ribosomal protein S11"/>
    <property type="match status" value="1"/>
</dbReference>
<dbReference type="HAMAP" id="MF_01310">
    <property type="entry name" value="Ribosomal_uS11"/>
    <property type="match status" value="1"/>
</dbReference>
<dbReference type="InterPro" id="IPR001971">
    <property type="entry name" value="Ribosomal_uS11"/>
</dbReference>
<dbReference type="InterPro" id="IPR018102">
    <property type="entry name" value="Ribosomal_uS11_CS"/>
</dbReference>
<dbReference type="InterPro" id="IPR036967">
    <property type="entry name" value="Ribosomal_uS11_sf"/>
</dbReference>
<dbReference type="NCBIfam" id="NF007176">
    <property type="entry name" value="PRK09607.1"/>
    <property type="match status" value="1"/>
</dbReference>
<dbReference type="PANTHER" id="PTHR11759">
    <property type="entry name" value="40S RIBOSOMAL PROTEIN S14/30S RIBOSOMAL PROTEIN S11"/>
    <property type="match status" value="1"/>
</dbReference>
<dbReference type="Pfam" id="PF00411">
    <property type="entry name" value="Ribosomal_S11"/>
    <property type="match status" value="1"/>
</dbReference>
<dbReference type="PIRSF" id="PIRSF002131">
    <property type="entry name" value="Ribosomal_S11"/>
    <property type="match status" value="1"/>
</dbReference>
<dbReference type="SUPFAM" id="SSF53137">
    <property type="entry name" value="Translational machinery components"/>
    <property type="match status" value="1"/>
</dbReference>
<dbReference type="PROSITE" id="PS00054">
    <property type="entry name" value="RIBOSOMAL_S11"/>
    <property type="match status" value="1"/>
</dbReference>
<keyword id="KW-0963">Cytoplasm</keyword>
<keyword id="KW-1185">Reference proteome</keyword>
<keyword id="KW-0687">Ribonucleoprotein</keyword>
<keyword id="KW-0689">Ribosomal protein</keyword>
<evidence type="ECO:0000303" key="1">
    <source>
    </source>
</evidence>
<evidence type="ECO:0000305" key="2"/>
<gene>
    <name type="primary">RPS14C</name>
    <name type="ordered locus">At3g52580</name>
    <name type="ORF">F22O6_40</name>
    <name type="ORF">F3C22.6</name>
</gene>
<proteinExistence type="evidence at transcript level"/>
<name>RS143_ARATH</name>